<name>PLSY_HAHCH</name>
<feature type="chain" id="PRO_0000250304" description="Glycerol-3-phosphate acyltransferase">
    <location>
        <begin position="1"/>
        <end position="194"/>
    </location>
</feature>
<feature type="transmembrane region" description="Helical" evidence="1">
    <location>
        <begin position="7"/>
        <end position="27"/>
    </location>
</feature>
<feature type="transmembrane region" description="Helical" evidence="1">
    <location>
        <begin position="59"/>
        <end position="79"/>
    </location>
</feature>
<feature type="transmembrane region" description="Helical" evidence="1">
    <location>
        <begin position="86"/>
        <end position="106"/>
    </location>
</feature>
<feature type="transmembrane region" description="Helical" evidence="1">
    <location>
        <begin position="116"/>
        <end position="136"/>
    </location>
</feature>
<feature type="transmembrane region" description="Helical" evidence="1">
    <location>
        <begin position="157"/>
        <end position="177"/>
    </location>
</feature>
<reference key="1">
    <citation type="journal article" date="2005" name="Nucleic Acids Res.">
        <title>Genomic blueprint of Hahella chejuensis, a marine microbe producing an algicidal agent.</title>
        <authorList>
            <person name="Jeong H."/>
            <person name="Yim J.H."/>
            <person name="Lee C."/>
            <person name="Choi S.-H."/>
            <person name="Park Y.K."/>
            <person name="Yoon S.H."/>
            <person name="Hur C.-G."/>
            <person name="Kang H.-Y."/>
            <person name="Kim D."/>
            <person name="Lee H.H."/>
            <person name="Park K.H."/>
            <person name="Park S.-H."/>
            <person name="Park H.-S."/>
            <person name="Lee H.K."/>
            <person name="Oh T.K."/>
            <person name="Kim J.F."/>
        </authorList>
    </citation>
    <scope>NUCLEOTIDE SEQUENCE [LARGE SCALE GENOMIC DNA]</scope>
    <source>
        <strain>KCTC 2396</strain>
    </source>
</reference>
<keyword id="KW-0997">Cell inner membrane</keyword>
<keyword id="KW-1003">Cell membrane</keyword>
<keyword id="KW-0444">Lipid biosynthesis</keyword>
<keyword id="KW-0443">Lipid metabolism</keyword>
<keyword id="KW-0472">Membrane</keyword>
<keyword id="KW-0594">Phospholipid biosynthesis</keyword>
<keyword id="KW-1208">Phospholipid metabolism</keyword>
<keyword id="KW-1185">Reference proteome</keyword>
<keyword id="KW-0808">Transferase</keyword>
<keyword id="KW-0812">Transmembrane</keyword>
<keyword id="KW-1133">Transmembrane helix</keyword>
<protein>
    <recommendedName>
        <fullName evidence="1">Glycerol-3-phosphate acyltransferase</fullName>
    </recommendedName>
    <alternativeName>
        <fullName evidence="1">Acyl-PO4 G3P acyltransferase</fullName>
    </alternativeName>
    <alternativeName>
        <fullName evidence="1">Acyl-phosphate--glycerol-3-phosphate acyltransferase</fullName>
    </alternativeName>
    <alternativeName>
        <fullName evidence="1">G3P acyltransferase</fullName>
        <shortName evidence="1">GPAT</shortName>
        <ecNumber evidence="1">2.3.1.275</ecNumber>
    </alternativeName>
    <alternativeName>
        <fullName evidence="1">Lysophosphatidic acid synthase</fullName>
        <shortName evidence="1">LPA synthase</shortName>
    </alternativeName>
</protein>
<organism>
    <name type="scientific">Hahella chejuensis (strain KCTC 2396)</name>
    <dbReference type="NCBI Taxonomy" id="349521"/>
    <lineage>
        <taxon>Bacteria</taxon>
        <taxon>Pseudomonadati</taxon>
        <taxon>Pseudomonadota</taxon>
        <taxon>Gammaproteobacteria</taxon>
        <taxon>Oceanospirillales</taxon>
        <taxon>Hahellaceae</taxon>
        <taxon>Hahella</taxon>
    </lineage>
</organism>
<evidence type="ECO:0000255" key="1">
    <source>
        <dbReference type="HAMAP-Rule" id="MF_01043"/>
    </source>
</evidence>
<dbReference type="EC" id="2.3.1.275" evidence="1"/>
<dbReference type="EMBL" id="CP000155">
    <property type="protein sequence ID" value="ABC32916.1"/>
    <property type="molecule type" value="Genomic_DNA"/>
</dbReference>
<dbReference type="RefSeq" id="WP_011399972.1">
    <property type="nucleotide sequence ID" value="NC_007645.1"/>
</dbReference>
<dbReference type="SMR" id="Q2S8V8"/>
<dbReference type="STRING" id="349521.HCH_06269"/>
<dbReference type="KEGG" id="hch:HCH_06269"/>
<dbReference type="eggNOG" id="COG0344">
    <property type="taxonomic scope" value="Bacteria"/>
</dbReference>
<dbReference type="HOGENOM" id="CLU_081254_0_0_6"/>
<dbReference type="OrthoDB" id="9777124at2"/>
<dbReference type="UniPathway" id="UPA00085"/>
<dbReference type="Proteomes" id="UP000000238">
    <property type="component" value="Chromosome"/>
</dbReference>
<dbReference type="GO" id="GO:0005886">
    <property type="term" value="C:plasma membrane"/>
    <property type="evidence" value="ECO:0007669"/>
    <property type="project" value="UniProtKB-SubCell"/>
</dbReference>
<dbReference type="GO" id="GO:0043772">
    <property type="term" value="F:acyl-phosphate glycerol-3-phosphate acyltransferase activity"/>
    <property type="evidence" value="ECO:0007669"/>
    <property type="project" value="UniProtKB-UniRule"/>
</dbReference>
<dbReference type="GO" id="GO:0008654">
    <property type="term" value="P:phospholipid biosynthetic process"/>
    <property type="evidence" value="ECO:0007669"/>
    <property type="project" value="UniProtKB-UniRule"/>
</dbReference>
<dbReference type="HAMAP" id="MF_01043">
    <property type="entry name" value="PlsY"/>
    <property type="match status" value="1"/>
</dbReference>
<dbReference type="InterPro" id="IPR003811">
    <property type="entry name" value="G3P_acylTferase_PlsY"/>
</dbReference>
<dbReference type="NCBIfam" id="TIGR00023">
    <property type="entry name" value="glycerol-3-phosphate 1-O-acyltransferase PlsY"/>
    <property type="match status" value="1"/>
</dbReference>
<dbReference type="PANTHER" id="PTHR30309:SF0">
    <property type="entry name" value="GLYCEROL-3-PHOSPHATE ACYLTRANSFERASE-RELATED"/>
    <property type="match status" value="1"/>
</dbReference>
<dbReference type="PANTHER" id="PTHR30309">
    <property type="entry name" value="INNER MEMBRANE PROTEIN YGIH"/>
    <property type="match status" value="1"/>
</dbReference>
<dbReference type="Pfam" id="PF02660">
    <property type="entry name" value="G3P_acyltransf"/>
    <property type="match status" value="1"/>
</dbReference>
<dbReference type="SMART" id="SM01207">
    <property type="entry name" value="G3P_acyltransf"/>
    <property type="match status" value="1"/>
</dbReference>
<sequence length="194" mass="20870">MEHPFQLLMATSIAYLLGSIMGAYWVCRYFQLPDPTESGSGNPGATNIYRLGGPVPATLTLFWDAAKGAAAVCIAAMLGLSPYEQGVTAVAAIVGHMLPAFHHFKGGKGVATVLGAGLALAWQTTLALTLVWAAVVYWKRISSLASLTAALMAPWVAWRLNPEHLALFLILSLFILIRHRENIINLAKGKERSL</sequence>
<accession>Q2S8V8</accession>
<proteinExistence type="inferred from homology"/>
<comment type="function">
    <text evidence="1">Catalyzes the transfer of an acyl group from acyl-phosphate (acyl-PO(4)) to glycerol-3-phosphate (G3P) to form lysophosphatidic acid (LPA). This enzyme utilizes acyl-phosphate as fatty acyl donor, but not acyl-CoA or acyl-ACP.</text>
</comment>
<comment type="catalytic activity">
    <reaction evidence="1">
        <text>an acyl phosphate + sn-glycerol 3-phosphate = a 1-acyl-sn-glycero-3-phosphate + phosphate</text>
        <dbReference type="Rhea" id="RHEA:34075"/>
        <dbReference type="ChEBI" id="CHEBI:43474"/>
        <dbReference type="ChEBI" id="CHEBI:57597"/>
        <dbReference type="ChEBI" id="CHEBI:57970"/>
        <dbReference type="ChEBI" id="CHEBI:59918"/>
        <dbReference type="EC" id="2.3.1.275"/>
    </reaction>
</comment>
<comment type="pathway">
    <text evidence="1">Lipid metabolism; phospholipid metabolism.</text>
</comment>
<comment type="subunit">
    <text evidence="1">Probably interacts with PlsX.</text>
</comment>
<comment type="subcellular location">
    <subcellularLocation>
        <location evidence="1">Cell inner membrane</location>
        <topology evidence="1">Multi-pass membrane protein</topology>
    </subcellularLocation>
</comment>
<comment type="similarity">
    <text evidence="1">Belongs to the PlsY family.</text>
</comment>
<gene>
    <name evidence="1" type="primary">plsY</name>
    <name type="ordered locus">HCH_06269</name>
</gene>